<protein>
    <recommendedName>
        <fullName evidence="1">HTH-type transcriptional regulator UlaR</fullName>
    </recommendedName>
</protein>
<gene>
    <name evidence="1" type="primary">ulaR</name>
    <name type="ordered locus">SSPA3898</name>
</gene>
<proteinExistence type="inferred from homology"/>
<feature type="chain" id="PRO_1000190476" description="HTH-type transcriptional regulator UlaR">
    <location>
        <begin position="1"/>
        <end position="251"/>
    </location>
</feature>
<feature type="domain" description="HTH deoR-type" evidence="1">
    <location>
        <begin position="3"/>
        <end position="58"/>
    </location>
</feature>
<feature type="DNA-binding region" description="H-T-H motif" evidence="1">
    <location>
        <begin position="20"/>
        <end position="39"/>
    </location>
</feature>
<name>ULAR_SALPK</name>
<evidence type="ECO:0000255" key="1">
    <source>
        <dbReference type="HAMAP-Rule" id="MF_01563"/>
    </source>
</evidence>
<organism>
    <name type="scientific">Salmonella paratyphi A (strain AKU_12601)</name>
    <dbReference type="NCBI Taxonomy" id="554290"/>
    <lineage>
        <taxon>Bacteria</taxon>
        <taxon>Pseudomonadati</taxon>
        <taxon>Pseudomonadota</taxon>
        <taxon>Gammaproteobacteria</taxon>
        <taxon>Enterobacterales</taxon>
        <taxon>Enterobacteriaceae</taxon>
        <taxon>Salmonella</taxon>
    </lineage>
</organism>
<sequence>MTEAQRHQILLDMLAQLGFVTVENVIERLGISPATARRDINKLDESGKLKKVRNGAEAITQQRPRWTPMNLHQAQNHDEKVRIAKAASQLVNPGESVVINCGSTAFLLGREMCGKPVQIITNYLPLANYLIDQEHDSVIIMGGQYNKSQSITLSPQGSENSLYAGHWMFTSGKGLTADGLYKTDMLTAMAEQKMLSVVGKLVALVDSSKIGERAGMLFSRADQIAMLITGKNANPQVLQQLEAQGVSILRV</sequence>
<reference key="1">
    <citation type="journal article" date="2009" name="BMC Genomics">
        <title>Pseudogene accumulation in the evolutionary histories of Salmonella enterica serovars Paratyphi A and Typhi.</title>
        <authorList>
            <person name="Holt K.E."/>
            <person name="Thomson N.R."/>
            <person name="Wain J."/>
            <person name="Langridge G.C."/>
            <person name="Hasan R."/>
            <person name="Bhutta Z.A."/>
            <person name="Quail M.A."/>
            <person name="Norbertczak H."/>
            <person name="Walker D."/>
            <person name="Simmonds M."/>
            <person name="White B."/>
            <person name="Bason N."/>
            <person name="Mungall K."/>
            <person name="Dougan G."/>
            <person name="Parkhill J."/>
        </authorList>
    </citation>
    <scope>NUCLEOTIDE SEQUENCE [LARGE SCALE GENOMIC DNA]</scope>
    <source>
        <strain>AKU_12601</strain>
    </source>
</reference>
<keyword id="KW-0963">Cytoplasm</keyword>
<keyword id="KW-0238">DNA-binding</keyword>
<keyword id="KW-0678">Repressor</keyword>
<keyword id="KW-0804">Transcription</keyword>
<keyword id="KW-0805">Transcription regulation</keyword>
<accession>B5BKJ9</accession>
<dbReference type="EMBL" id="FM200053">
    <property type="protein sequence ID" value="CAR62184.1"/>
    <property type="molecule type" value="Genomic_DNA"/>
</dbReference>
<dbReference type="RefSeq" id="WP_000133618.1">
    <property type="nucleotide sequence ID" value="NC_011147.1"/>
</dbReference>
<dbReference type="SMR" id="B5BKJ9"/>
<dbReference type="KEGG" id="sek:SSPA3898"/>
<dbReference type="HOGENOM" id="CLU_060699_3_2_6"/>
<dbReference type="Proteomes" id="UP000001869">
    <property type="component" value="Chromosome"/>
</dbReference>
<dbReference type="GO" id="GO:0005737">
    <property type="term" value="C:cytoplasm"/>
    <property type="evidence" value="ECO:0007669"/>
    <property type="project" value="UniProtKB-SubCell"/>
</dbReference>
<dbReference type="GO" id="GO:0003677">
    <property type="term" value="F:DNA binding"/>
    <property type="evidence" value="ECO:0007669"/>
    <property type="project" value="UniProtKB-KW"/>
</dbReference>
<dbReference type="GO" id="GO:0003700">
    <property type="term" value="F:DNA-binding transcription factor activity"/>
    <property type="evidence" value="ECO:0007669"/>
    <property type="project" value="InterPro"/>
</dbReference>
<dbReference type="GO" id="GO:0045892">
    <property type="term" value="P:negative regulation of DNA-templated transcription"/>
    <property type="evidence" value="ECO:0007669"/>
    <property type="project" value="UniProtKB-UniRule"/>
</dbReference>
<dbReference type="FunFam" id="1.10.10.10:FF:000160">
    <property type="entry name" value="HTH-type transcriptional regulator UlaR"/>
    <property type="match status" value="1"/>
</dbReference>
<dbReference type="Gene3D" id="1.10.10.10">
    <property type="entry name" value="Winged helix-like DNA-binding domain superfamily/Winged helix DNA-binding domain"/>
    <property type="match status" value="1"/>
</dbReference>
<dbReference type="HAMAP" id="MF_01563">
    <property type="entry name" value="HTH_type_UlaR"/>
    <property type="match status" value="1"/>
</dbReference>
<dbReference type="InterPro" id="IPR050313">
    <property type="entry name" value="Carb_Metab_HTH_regulators"/>
</dbReference>
<dbReference type="InterPro" id="IPR014036">
    <property type="entry name" value="DeoR-like_C"/>
</dbReference>
<dbReference type="InterPro" id="IPR001034">
    <property type="entry name" value="DeoR_HTH"/>
</dbReference>
<dbReference type="InterPro" id="IPR037171">
    <property type="entry name" value="NagB/RpiA_transferase-like"/>
</dbReference>
<dbReference type="InterPro" id="IPR018356">
    <property type="entry name" value="Tscrpt_reg_HTH_DeoR_CS"/>
</dbReference>
<dbReference type="InterPro" id="IPR023711">
    <property type="entry name" value="Tscrpt_reg_HTH_UlaR"/>
</dbReference>
<dbReference type="InterPro" id="IPR036388">
    <property type="entry name" value="WH-like_DNA-bd_sf"/>
</dbReference>
<dbReference type="InterPro" id="IPR036390">
    <property type="entry name" value="WH_DNA-bd_sf"/>
</dbReference>
<dbReference type="NCBIfam" id="NF010034">
    <property type="entry name" value="PRK13509.1"/>
    <property type="match status" value="1"/>
</dbReference>
<dbReference type="PANTHER" id="PTHR30363">
    <property type="entry name" value="HTH-TYPE TRANSCRIPTIONAL REGULATOR SRLR-RELATED"/>
    <property type="match status" value="1"/>
</dbReference>
<dbReference type="PANTHER" id="PTHR30363:SF55">
    <property type="entry name" value="HTH-TYPE TRANSCRIPTIONAL REGULATOR ULAR"/>
    <property type="match status" value="1"/>
</dbReference>
<dbReference type="Pfam" id="PF00455">
    <property type="entry name" value="DeoRC"/>
    <property type="match status" value="1"/>
</dbReference>
<dbReference type="Pfam" id="PF08220">
    <property type="entry name" value="HTH_DeoR"/>
    <property type="match status" value="1"/>
</dbReference>
<dbReference type="PRINTS" id="PR00037">
    <property type="entry name" value="HTHLACR"/>
</dbReference>
<dbReference type="SMART" id="SM01134">
    <property type="entry name" value="DeoRC"/>
    <property type="match status" value="1"/>
</dbReference>
<dbReference type="SMART" id="SM00420">
    <property type="entry name" value="HTH_DEOR"/>
    <property type="match status" value="1"/>
</dbReference>
<dbReference type="SUPFAM" id="SSF100950">
    <property type="entry name" value="NagB/RpiA/CoA transferase-like"/>
    <property type="match status" value="1"/>
</dbReference>
<dbReference type="SUPFAM" id="SSF46785">
    <property type="entry name" value="Winged helix' DNA-binding domain"/>
    <property type="match status" value="1"/>
</dbReference>
<dbReference type="PROSITE" id="PS00894">
    <property type="entry name" value="HTH_DEOR_1"/>
    <property type="match status" value="1"/>
</dbReference>
<dbReference type="PROSITE" id="PS51000">
    <property type="entry name" value="HTH_DEOR_2"/>
    <property type="match status" value="1"/>
</dbReference>
<comment type="function">
    <text evidence="1">Represses ulaG and the ulaABCDEF operon.</text>
</comment>
<comment type="subcellular location">
    <subcellularLocation>
        <location evidence="1">Cytoplasm</location>
    </subcellularLocation>
</comment>